<name>RL28_STRT2</name>
<gene>
    <name evidence="1" type="primary">rpmB</name>
    <name type="ordered locus">stu1958</name>
</gene>
<sequence>MAKVCYFTGRKTVSGNNRSHAMNKTKRVVKPNLQKVTVLIDGKPKKVWASARALKSGKVERV</sequence>
<comment type="similarity">
    <text evidence="1">Belongs to the bacterial ribosomal protein bL28 family.</text>
</comment>
<accession>Q5M294</accession>
<proteinExistence type="inferred from homology"/>
<dbReference type="EMBL" id="CP000023">
    <property type="protein sequence ID" value="AAV61552.1"/>
    <property type="molecule type" value="Genomic_DNA"/>
</dbReference>
<dbReference type="RefSeq" id="WP_002952184.1">
    <property type="nucleotide sequence ID" value="NC_006448.1"/>
</dbReference>
<dbReference type="SMR" id="Q5M294"/>
<dbReference type="STRING" id="264199.stu1958"/>
<dbReference type="GeneID" id="66899685"/>
<dbReference type="KEGG" id="stl:stu1958"/>
<dbReference type="eggNOG" id="COG0227">
    <property type="taxonomic scope" value="Bacteria"/>
</dbReference>
<dbReference type="HOGENOM" id="CLU_064548_7_1_9"/>
<dbReference type="Proteomes" id="UP000001170">
    <property type="component" value="Chromosome"/>
</dbReference>
<dbReference type="GO" id="GO:1990904">
    <property type="term" value="C:ribonucleoprotein complex"/>
    <property type="evidence" value="ECO:0007669"/>
    <property type="project" value="UniProtKB-KW"/>
</dbReference>
<dbReference type="GO" id="GO:0005840">
    <property type="term" value="C:ribosome"/>
    <property type="evidence" value="ECO:0007669"/>
    <property type="project" value="UniProtKB-KW"/>
</dbReference>
<dbReference type="GO" id="GO:0003735">
    <property type="term" value="F:structural constituent of ribosome"/>
    <property type="evidence" value="ECO:0007669"/>
    <property type="project" value="InterPro"/>
</dbReference>
<dbReference type="GO" id="GO:0006412">
    <property type="term" value="P:translation"/>
    <property type="evidence" value="ECO:0007669"/>
    <property type="project" value="UniProtKB-UniRule"/>
</dbReference>
<dbReference type="Gene3D" id="2.30.170.40">
    <property type="entry name" value="Ribosomal protein L28/L24"/>
    <property type="match status" value="1"/>
</dbReference>
<dbReference type="HAMAP" id="MF_00373">
    <property type="entry name" value="Ribosomal_bL28"/>
    <property type="match status" value="1"/>
</dbReference>
<dbReference type="InterPro" id="IPR050096">
    <property type="entry name" value="Bacterial_rp_bL28"/>
</dbReference>
<dbReference type="InterPro" id="IPR026569">
    <property type="entry name" value="Ribosomal_bL28"/>
</dbReference>
<dbReference type="InterPro" id="IPR034704">
    <property type="entry name" value="Ribosomal_bL28/bL31-like_sf"/>
</dbReference>
<dbReference type="InterPro" id="IPR001383">
    <property type="entry name" value="Ribosomal_bL28_bact-type"/>
</dbReference>
<dbReference type="InterPro" id="IPR037147">
    <property type="entry name" value="Ribosomal_bL28_sf"/>
</dbReference>
<dbReference type="NCBIfam" id="TIGR00009">
    <property type="entry name" value="L28"/>
    <property type="match status" value="1"/>
</dbReference>
<dbReference type="PANTHER" id="PTHR39080">
    <property type="entry name" value="50S RIBOSOMAL PROTEIN L28"/>
    <property type="match status" value="1"/>
</dbReference>
<dbReference type="PANTHER" id="PTHR39080:SF1">
    <property type="entry name" value="LARGE RIBOSOMAL SUBUNIT PROTEIN BL28A"/>
    <property type="match status" value="1"/>
</dbReference>
<dbReference type="Pfam" id="PF00830">
    <property type="entry name" value="Ribosomal_L28"/>
    <property type="match status" value="1"/>
</dbReference>
<dbReference type="SUPFAM" id="SSF143800">
    <property type="entry name" value="L28p-like"/>
    <property type="match status" value="1"/>
</dbReference>
<reference key="1">
    <citation type="journal article" date="2004" name="Nat. Biotechnol.">
        <title>Complete sequence and comparative genome analysis of the dairy bacterium Streptococcus thermophilus.</title>
        <authorList>
            <person name="Bolotin A."/>
            <person name="Quinquis B."/>
            <person name="Renault P."/>
            <person name="Sorokin A."/>
            <person name="Ehrlich S.D."/>
            <person name="Kulakauskas S."/>
            <person name="Lapidus A."/>
            <person name="Goltsman E."/>
            <person name="Mazur M."/>
            <person name="Pusch G.D."/>
            <person name="Fonstein M."/>
            <person name="Overbeek R."/>
            <person name="Kyprides N."/>
            <person name="Purnelle B."/>
            <person name="Prozzi D."/>
            <person name="Ngui K."/>
            <person name="Masuy D."/>
            <person name="Hancy F."/>
            <person name="Burteau S."/>
            <person name="Boutry M."/>
            <person name="Delcour J."/>
            <person name="Goffeau A."/>
            <person name="Hols P."/>
        </authorList>
    </citation>
    <scope>NUCLEOTIDE SEQUENCE [LARGE SCALE GENOMIC DNA]</scope>
    <source>
        <strain>ATCC BAA-250 / LMG 18311</strain>
    </source>
</reference>
<protein>
    <recommendedName>
        <fullName evidence="1">Large ribosomal subunit protein bL28</fullName>
    </recommendedName>
    <alternativeName>
        <fullName evidence="2">50S ribosomal protein L28</fullName>
    </alternativeName>
</protein>
<organism>
    <name type="scientific">Streptococcus thermophilus (strain ATCC BAA-250 / LMG 18311)</name>
    <dbReference type="NCBI Taxonomy" id="264199"/>
    <lineage>
        <taxon>Bacteria</taxon>
        <taxon>Bacillati</taxon>
        <taxon>Bacillota</taxon>
        <taxon>Bacilli</taxon>
        <taxon>Lactobacillales</taxon>
        <taxon>Streptococcaceae</taxon>
        <taxon>Streptococcus</taxon>
    </lineage>
</organism>
<keyword id="KW-1185">Reference proteome</keyword>
<keyword id="KW-0687">Ribonucleoprotein</keyword>
<keyword id="KW-0689">Ribosomal protein</keyword>
<feature type="chain" id="PRO_0000178570" description="Large ribosomal subunit protein bL28">
    <location>
        <begin position="1"/>
        <end position="62"/>
    </location>
</feature>
<evidence type="ECO:0000255" key="1">
    <source>
        <dbReference type="HAMAP-Rule" id="MF_00373"/>
    </source>
</evidence>
<evidence type="ECO:0000305" key="2"/>